<evidence type="ECO:0000255" key="1">
    <source>
        <dbReference type="HAMAP-Rule" id="MF_00015"/>
    </source>
</evidence>
<feature type="chain" id="PRO_0000169998" description="LexA repressor">
    <location>
        <begin position="1"/>
        <end position="240"/>
    </location>
</feature>
<feature type="DNA-binding region" description="H-T-H motif" evidence="1">
    <location>
        <begin position="26"/>
        <end position="46"/>
    </location>
</feature>
<feature type="active site" description="For autocatalytic cleavage activity" evidence="1">
    <location>
        <position position="160"/>
    </location>
</feature>
<feature type="active site" description="For autocatalytic cleavage activity" evidence="1">
    <location>
        <position position="198"/>
    </location>
</feature>
<feature type="site" description="Cleavage; by autolysis" evidence="1">
    <location>
        <begin position="125"/>
        <end position="126"/>
    </location>
</feature>
<comment type="function">
    <text evidence="1">Represses a number of genes involved in the response to DNA damage (SOS response), including recA and lexA. In the presence of single-stranded DNA, RecA interacts with LexA causing an autocatalytic cleavage which disrupts the DNA-binding part of LexA, leading to derepression of the SOS regulon and eventually DNA repair.</text>
</comment>
<comment type="catalytic activity">
    <reaction evidence="1">
        <text>Hydrolysis of Ala-|-Gly bond in repressor LexA.</text>
        <dbReference type="EC" id="3.4.21.88"/>
    </reaction>
</comment>
<comment type="subunit">
    <text evidence="1">Homodimer.</text>
</comment>
<comment type="similarity">
    <text evidence="1">Belongs to the peptidase S24 family.</text>
</comment>
<protein>
    <recommendedName>
        <fullName evidence="1">LexA repressor</fullName>
        <ecNumber evidence="1">3.4.21.88</ecNumber>
    </recommendedName>
</protein>
<name>LEXA_AGRFC</name>
<organism>
    <name type="scientific">Agrobacterium fabrum (strain C58 / ATCC 33970)</name>
    <name type="common">Agrobacterium tumefaciens (strain C58)</name>
    <dbReference type="NCBI Taxonomy" id="176299"/>
    <lineage>
        <taxon>Bacteria</taxon>
        <taxon>Pseudomonadati</taxon>
        <taxon>Pseudomonadota</taxon>
        <taxon>Alphaproteobacteria</taxon>
        <taxon>Hyphomicrobiales</taxon>
        <taxon>Rhizobiaceae</taxon>
        <taxon>Rhizobium/Agrobacterium group</taxon>
        <taxon>Agrobacterium</taxon>
        <taxon>Agrobacterium tumefaciens complex</taxon>
    </lineage>
</organism>
<accession>Q8UFK2</accession>
<gene>
    <name evidence="1" type="primary">lexA</name>
    <name type="ordered locus">Atu1395</name>
    <name type="ORF">AGR_C_2577</name>
</gene>
<proteinExistence type="inferred from homology"/>
<dbReference type="EC" id="3.4.21.88" evidence="1"/>
<dbReference type="EMBL" id="AE007869">
    <property type="protein sequence ID" value="AAK87187.1"/>
    <property type="molecule type" value="Genomic_DNA"/>
</dbReference>
<dbReference type="PIR" id="AC2748">
    <property type="entry name" value="AC2748"/>
</dbReference>
<dbReference type="PIR" id="B97529">
    <property type="entry name" value="B97529"/>
</dbReference>
<dbReference type="RefSeq" id="NP_354402.1">
    <property type="nucleotide sequence ID" value="NC_003062.2"/>
</dbReference>
<dbReference type="RefSeq" id="WP_010971587.1">
    <property type="nucleotide sequence ID" value="NC_003062.2"/>
</dbReference>
<dbReference type="SMR" id="Q8UFK2"/>
<dbReference type="STRING" id="176299.Atu1395"/>
<dbReference type="MEROPS" id="S24.001"/>
<dbReference type="EnsemblBacteria" id="AAK87187">
    <property type="protein sequence ID" value="AAK87187"/>
    <property type="gene ID" value="Atu1395"/>
</dbReference>
<dbReference type="GeneID" id="1133433"/>
<dbReference type="KEGG" id="atu:Atu1395"/>
<dbReference type="PATRIC" id="fig|176299.10.peg.1418"/>
<dbReference type="eggNOG" id="COG1974">
    <property type="taxonomic scope" value="Bacteria"/>
</dbReference>
<dbReference type="HOGENOM" id="CLU_066192_45_2_5"/>
<dbReference type="OrthoDB" id="9802364at2"/>
<dbReference type="PhylomeDB" id="Q8UFK2"/>
<dbReference type="BioCyc" id="AGRO:ATU1395-MONOMER"/>
<dbReference type="Proteomes" id="UP000000813">
    <property type="component" value="Chromosome circular"/>
</dbReference>
<dbReference type="CollecTF" id="EXPREG_000013c0"/>
<dbReference type="GO" id="GO:0003677">
    <property type="term" value="F:DNA binding"/>
    <property type="evidence" value="ECO:0007669"/>
    <property type="project" value="UniProtKB-UniRule"/>
</dbReference>
<dbReference type="GO" id="GO:0004252">
    <property type="term" value="F:serine-type endopeptidase activity"/>
    <property type="evidence" value="ECO:0007669"/>
    <property type="project" value="UniProtKB-UniRule"/>
</dbReference>
<dbReference type="GO" id="GO:0006281">
    <property type="term" value="P:DNA repair"/>
    <property type="evidence" value="ECO:0007669"/>
    <property type="project" value="UniProtKB-UniRule"/>
</dbReference>
<dbReference type="GO" id="GO:0006260">
    <property type="term" value="P:DNA replication"/>
    <property type="evidence" value="ECO:0007669"/>
    <property type="project" value="UniProtKB-UniRule"/>
</dbReference>
<dbReference type="GO" id="GO:0045892">
    <property type="term" value="P:negative regulation of DNA-templated transcription"/>
    <property type="evidence" value="ECO:0000269"/>
    <property type="project" value="CollecTF"/>
</dbReference>
<dbReference type="GO" id="GO:0006508">
    <property type="term" value="P:proteolysis"/>
    <property type="evidence" value="ECO:0007669"/>
    <property type="project" value="InterPro"/>
</dbReference>
<dbReference type="GO" id="GO:0009432">
    <property type="term" value="P:SOS response"/>
    <property type="evidence" value="ECO:0007669"/>
    <property type="project" value="UniProtKB-UniRule"/>
</dbReference>
<dbReference type="CDD" id="cd06529">
    <property type="entry name" value="S24_LexA-like"/>
    <property type="match status" value="1"/>
</dbReference>
<dbReference type="FunFam" id="1.10.10.10:FF:000102">
    <property type="entry name" value="LexA repressor"/>
    <property type="match status" value="1"/>
</dbReference>
<dbReference type="FunFam" id="2.10.109.10:FF:000001">
    <property type="entry name" value="LexA repressor"/>
    <property type="match status" value="1"/>
</dbReference>
<dbReference type="Gene3D" id="2.10.109.10">
    <property type="entry name" value="Umud Fragment, subunit A"/>
    <property type="match status" value="1"/>
</dbReference>
<dbReference type="Gene3D" id="1.10.10.10">
    <property type="entry name" value="Winged helix-like DNA-binding domain superfamily/Winged helix DNA-binding domain"/>
    <property type="match status" value="1"/>
</dbReference>
<dbReference type="HAMAP" id="MF_00015">
    <property type="entry name" value="LexA"/>
    <property type="match status" value="1"/>
</dbReference>
<dbReference type="InterPro" id="IPR006200">
    <property type="entry name" value="LexA"/>
</dbReference>
<dbReference type="InterPro" id="IPR039418">
    <property type="entry name" value="LexA-like"/>
</dbReference>
<dbReference type="InterPro" id="IPR036286">
    <property type="entry name" value="LexA/Signal_pep-like_sf"/>
</dbReference>
<dbReference type="InterPro" id="IPR006199">
    <property type="entry name" value="LexA_DNA-bd_dom"/>
</dbReference>
<dbReference type="InterPro" id="IPR050077">
    <property type="entry name" value="LexA_repressor"/>
</dbReference>
<dbReference type="InterPro" id="IPR006197">
    <property type="entry name" value="Peptidase_S24_LexA"/>
</dbReference>
<dbReference type="InterPro" id="IPR015927">
    <property type="entry name" value="Peptidase_S24_S26A/B/C"/>
</dbReference>
<dbReference type="InterPro" id="IPR036388">
    <property type="entry name" value="WH-like_DNA-bd_sf"/>
</dbReference>
<dbReference type="InterPro" id="IPR036390">
    <property type="entry name" value="WH_DNA-bd_sf"/>
</dbReference>
<dbReference type="NCBIfam" id="TIGR00498">
    <property type="entry name" value="lexA"/>
    <property type="match status" value="1"/>
</dbReference>
<dbReference type="PANTHER" id="PTHR33516">
    <property type="entry name" value="LEXA REPRESSOR"/>
    <property type="match status" value="1"/>
</dbReference>
<dbReference type="PANTHER" id="PTHR33516:SF2">
    <property type="entry name" value="LEXA REPRESSOR-RELATED"/>
    <property type="match status" value="1"/>
</dbReference>
<dbReference type="Pfam" id="PF01726">
    <property type="entry name" value="LexA_DNA_bind"/>
    <property type="match status" value="1"/>
</dbReference>
<dbReference type="Pfam" id="PF00717">
    <property type="entry name" value="Peptidase_S24"/>
    <property type="match status" value="1"/>
</dbReference>
<dbReference type="PRINTS" id="PR00726">
    <property type="entry name" value="LEXASERPTASE"/>
</dbReference>
<dbReference type="SUPFAM" id="SSF51306">
    <property type="entry name" value="LexA/Signal peptidase"/>
    <property type="match status" value="1"/>
</dbReference>
<dbReference type="SUPFAM" id="SSF46785">
    <property type="entry name" value="Winged helix' DNA-binding domain"/>
    <property type="match status" value="1"/>
</dbReference>
<sequence>MLTRKQQELLLFIHERMKESGVPPSFDEMKDALDLASKSGIHRLITALEERGFIRRLPNRARALEVIKLPEAYTPGARPQRGFSPSVIEGSLGKPKEPEPAPAVKAPANDFAGAATIPVMGRIAAGVPISAIQNNTHDLAVPVDMLGSGEHYALEVKGDSMIEAGIFDGDTVIIRNGNTANPGDIVVALVDDEEATLKRFRRKGASIALEAANPAYETRIFGPDRVKIQGKLVGLIRRYH</sequence>
<reference key="1">
    <citation type="journal article" date="2001" name="Science">
        <title>The genome of the natural genetic engineer Agrobacterium tumefaciens C58.</title>
        <authorList>
            <person name="Wood D.W."/>
            <person name="Setubal J.C."/>
            <person name="Kaul R."/>
            <person name="Monks D.E."/>
            <person name="Kitajima J.P."/>
            <person name="Okura V.K."/>
            <person name="Zhou Y."/>
            <person name="Chen L."/>
            <person name="Wood G.E."/>
            <person name="Almeida N.F. Jr."/>
            <person name="Woo L."/>
            <person name="Chen Y."/>
            <person name="Paulsen I.T."/>
            <person name="Eisen J.A."/>
            <person name="Karp P.D."/>
            <person name="Bovee D. Sr."/>
            <person name="Chapman P."/>
            <person name="Clendenning J."/>
            <person name="Deatherage G."/>
            <person name="Gillet W."/>
            <person name="Grant C."/>
            <person name="Kutyavin T."/>
            <person name="Levy R."/>
            <person name="Li M.-J."/>
            <person name="McClelland E."/>
            <person name="Palmieri A."/>
            <person name="Raymond C."/>
            <person name="Rouse G."/>
            <person name="Saenphimmachak C."/>
            <person name="Wu Z."/>
            <person name="Romero P."/>
            <person name="Gordon D."/>
            <person name="Zhang S."/>
            <person name="Yoo H."/>
            <person name="Tao Y."/>
            <person name="Biddle P."/>
            <person name="Jung M."/>
            <person name="Krespan W."/>
            <person name="Perry M."/>
            <person name="Gordon-Kamm B."/>
            <person name="Liao L."/>
            <person name="Kim S."/>
            <person name="Hendrick C."/>
            <person name="Zhao Z.-Y."/>
            <person name="Dolan M."/>
            <person name="Chumley F."/>
            <person name="Tingey S.V."/>
            <person name="Tomb J.-F."/>
            <person name="Gordon M.P."/>
            <person name="Olson M.V."/>
            <person name="Nester E.W."/>
        </authorList>
    </citation>
    <scope>NUCLEOTIDE SEQUENCE [LARGE SCALE GENOMIC DNA]</scope>
    <source>
        <strain>C58 / ATCC 33970</strain>
    </source>
</reference>
<reference key="2">
    <citation type="journal article" date="2001" name="Science">
        <title>Genome sequence of the plant pathogen and biotechnology agent Agrobacterium tumefaciens C58.</title>
        <authorList>
            <person name="Goodner B."/>
            <person name="Hinkle G."/>
            <person name="Gattung S."/>
            <person name="Miller N."/>
            <person name="Blanchard M."/>
            <person name="Qurollo B."/>
            <person name="Goldman B.S."/>
            <person name="Cao Y."/>
            <person name="Askenazi M."/>
            <person name="Halling C."/>
            <person name="Mullin L."/>
            <person name="Houmiel K."/>
            <person name="Gordon J."/>
            <person name="Vaudin M."/>
            <person name="Iartchouk O."/>
            <person name="Epp A."/>
            <person name="Liu F."/>
            <person name="Wollam C."/>
            <person name="Allinger M."/>
            <person name="Doughty D."/>
            <person name="Scott C."/>
            <person name="Lappas C."/>
            <person name="Markelz B."/>
            <person name="Flanagan C."/>
            <person name="Crowell C."/>
            <person name="Gurson J."/>
            <person name="Lomo C."/>
            <person name="Sear C."/>
            <person name="Strub G."/>
            <person name="Cielo C."/>
            <person name="Slater S."/>
        </authorList>
    </citation>
    <scope>NUCLEOTIDE SEQUENCE [LARGE SCALE GENOMIC DNA]</scope>
    <source>
        <strain>C58 / ATCC 33970</strain>
    </source>
</reference>
<keyword id="KW-0068">Autocatalytic cleavage</keyword>
<keyword id="KW-0227">DNA damage</keyword>
<keyword id="KW-0234">DNA repair</keyword>
<keyword id="KW-0235">DNA replication</keyword>
<keyword id="KW-0238">DNA-binding</keyword>
<keyword id="KW-0378">Hydrolase</keyword>
<keyword id="KW-1185">Reference proteome</keyword>
<keyword id="KW-0678">Repressor</keyword>
<keyword id="KW-0742">SOS response</keyword>
<keyword id="KW-0804">Transcription</keyword>
<keyword id="KW-0805">Transcription regulation</keyword>